<reference key="1">
    <citation type="journal article" date="2005" name="Science">
        <title>The transcriptional landscape of the mammalian genome.</title>
        <authorList>
            <person name="Carninci P."/>
            <person name="Kasukawa T."/>
            <person name="Katayama S."/>
            <person name="Gough J."/>
            <person name="Frith M.C."/>
            <person name="Maeda N."/>
            <person name="Oyama R."/>
            <person name="Ravasi T."/>
            <person name="Lenhard B."/>
            <person name="Wells C."/>
            <person name="Kodzius R."/>
            <person name="Shimokawa K."/>
            <person name="Bajic V.B."/>
            <person name="Brenner S.E."/>
            <person name="Batalov S."/>
            <person name="Forrest A.R."/>
            <person name="Zavolan M."/>
            <person name="Davis M.J."/>
            <person name="Wilming L.G."/>
            <person name="Aidinis V."/>
            <person name="Allen J.E."/>
            <person name="Ambesi-Impiombato A."/>
            <person name="Apweiler R."/>
            <person name="Aturaliya R.N."/>
            <person name="Bailey T.L."/>
            <person name="Bansal M."/>
            <person name="Baxter L."/>
            <person name="Beisel K.W."/>
            <person name="Bersano T."/>
            <person name="Bono H."/>
            <person name="Chalk A.M."/>
            <person name="Chiu K.P."/>
            <person name="Choudhary V."/>
            <person name="Christoffels A."/>
            <person name="Clutterbuck D.R."/>
            <person name="Crowe M.L."/>
            <person name="Dalla E."/>
            <person name="Dalrymple B.P."/>
            <person name="de Bono B."/>
            <person name="Della Gatta G."/>
            <person name="di Bernardo D."/>
            <person name="Down T."/>
            <person name="Engstrom P."/>
            <person name="Fagiolini M."/>
            <person name="Faulkner G."/>
            <person name="Fletcher C.F."/>
            <person name="Fukushima T."/>
            <person name="Furuno M."/>
            <person name="Futaki S."/>
            <person name="Gariboldi M."/>
            <person name="Georgii-Hemming P."/>
            <person name="Gingeras T.R."/>
            <person name="Gojobori T."/>
            <person name="Green R.E."/>
            <person name="Gustincich S."/>
            <person name="Harbers M."/>
            <person name="Hayashi Y."/>
            <person name="Hensch T.K."/>
            <person name="Hirokawa N."/>
            <person name="Hill D."/>
            <person name="Huminiecki L."/>
            <person name="Iacono M."/>
            <person name="Ikeo K."/>
            <person name="Iwama A."/>
            <person name="Ishikawa T."/>
            <person name="Jakt M."/>
            <person name="Kanapin A."/>
            <person name="Katoh M."/>
            <person name="Kawasawa Y."/>
            <person name="Kelso J."/>
            <person name="Kitamura H."/>
            <person name="Kitano H."/>
            <person name="Kollias G."/>
            <person name="Krishnan S.P."/>
            <person name="Kruger A."/>
            <person name="Kummerfeld S.K."/>
            <person name="Kurochkin I.V."/>
            <person name="Lareau L.F."/>
            <person name="Lazarevic D."/>
            <person name="Lipovich L."/>
            <person name="Liu J."/>
            <person name="Liuni S."/>
            <person name="McWilliam S."/>
            <person name="Madan Babu M."/>
            <person name="Madera M."/>
            <person name="Marchionni L."/>
            <person name="Matsuda H."/>
            <person name="Matsuzawa S."/>
            <person name="Miki H."/>
            <person name="Mignone F."/>
            <person name="Miyake S."/>
            <person name="Morris K."/>
            <person name="Mottagui-Tabar S."/>
            <person name="Mulder N."/>
            <person name="Nakano N."/>
            <person name="Nakauchi H."/>
            <person name="Ng P."/>
            <person name="Nilsson R."/>
            <person name="Nishiguchi S."/>
            <person name="Nishikawa S."/>
            <person name="Nori F."/>
            <person name="Ohara O."/>
            <person name="Okazaki Y."/>
            <person name="Orlando V."/>
            <person name="Pang K.C."/>
            <person name="Pavan W.J."/>
            <person name="Pavesi G."/>
            <person name="Pesole G."/>
            <person name="Petrovsky N."/>
            <person name="Piazza S."/>
            <person name="Reed J."/>
            <person name="Reid J.F."/>
            <person name="Ring B.Z."/>
            <person name="Ringwald M."/>
            <person name="Rost B."/>
            <person name="Ruan Y."/>
            <person name="Salzberg S.L."/>
            <person name="Sandelin A."/>
            <person name="Schneider C."/>
            <person name="Schoenbach C."/>
            <person name="Sekiguchi K."/>
            <person name="Semple C.A."/>
            <person name="Seno S."/>
            <person name="Sessa L."/>
            <person name="Sheng Y."/>
            <person name="Shibata Y."/>
            <person name="Shimada H."/>
            <person name="Shimada K."/>
            <person name="Silva D."/>
            <person name="Sinclair B."/>
            <person name="Sperling S."/>
            <person name="Stupka E."/>
            <person name="Sugiura K."/>
            <person name="Sultana R."/>
            <person name="Takenaka Y."/>
            <person name="Taki K."/>
            <person name="Tammoja K."/>
            <person name="Tan S.L."/>
            <person name="Tang S."/>
            <person name="Taylor M.S."/>
            <person name="Tegner J."/>
            <person name="Teichmann S.A."/>
            <person name="Ueda H.R."/>
            <person name="van Nimwegen E."/>
            <person name="Verardo R."/>
            <person name="Wei C.L."/>
            <person name="Yagi K."/>
            <person name="Yamanishi H."/>
            <person name="Zabarovsky E."/>
            <person name="Zhu S."/>
            <person name="Zimmer A."/>
            <person name="Hide W."/>
            <person name="Bult C."/>
            <person name="Grimmond S.M."/>
            <person name="Teasdale R.D."/>
            <person name="Liu E.T."/>
            <person name="Brusic V."/>
            <person name="Quackenbush J."/>
            <person name="Wahlestedt C."/>
            <person name="Mattick J.S."/>
            <person name="Hume D.A."/>
            <person name="Kai C."/>
            <person name="Sasaki D."/>
            <person name="Tomaru Y."/>
            <person name="Fukuda S."/>
            <person name="Kanamori-Katayama M."/>
            <person name="Suzuki M."/>
            <person name="Aoki J."/>
            <person name="Arakawa T."/>
            <person name="Iida J."/>
            <person name="Imamura K."/>
            <person name="Itoh M."/>
            <person name="Kato T."/>
            <person name="Kawaji H."/>
            <person name="Kawagashira N."/>
            <person name="Kawashima T."/>
            <person name="Kojima M."/>
            <person name="Kondo S."/>
            <person name="Konno H."/>
            <person name="Nakano K."/>
            <person name="Ninomiya N."/>
            <person name="Nishio T."/>
            <person name="Okada M."/>
            <person name="Plessy C."/>
            <person name="Shibata K."/>
            <person name="Shiraki T."/>
            <person name="Suzuki S."/>
            <person name="Tagami M."/>
            <person name="Waki K."/>
            <person name="Watahiki A."/>
            <person name="Okamura-Oho Y."/>
            <person name="Suzuki H."/>
            <person name="Kawai J."/>
            <person name="Hayashizaki Y."/>
        </authorList>
    </citation>
    <scope>NUCLEOTIDE SEQUENCE [LARGE SCALE MRNA] (ISOFORM 1)</scope>
    <source>
        <strain>C57BL/6J</strain>
        <strain>NOD</strain>
        <tissue>Embryo</tissue>
        <tissue>Spleen</tissue>
    </source>
</reference>
<reference key="2">
    <citation type="journal article" date="2009" name="PLoS Biol.">
        <title>Lineage-specific biology revealed by a finished genome assembly of the mouse.</title>
        <authorList>
            <person name="Church D.M."/>
            <person name="Goodstadt L."/>
            <person name="Hillier L.W."/>
            <person name="Zody M.C."/>
            <person name="Goldstein S."/>
            <person name="She X."/>
            <person name="Bult C.J."/>
            <person name="Agarwala R."/>
            <person name="Cherry J.L."/>
            <person name="DiCuccio M."/>
            <person name="Hlavina W."/>
            <person name="Kapustin Y."/>
            <person name="Meric P."/>
            <person name="Maglott D."/>
            <person name="Birtle Z."/>
            <person name="Marques A.C."/>
            <person name="Graves T."/>
            <person name="Zhou S."/>
            <person name="Teague B."/>
            <person name="Potamousis K."/>
            <person name="Churas C."/>
            <person name="Place M."/>
            <person name="Herschleb J."/>
            <person name="Runnheim R."/>
            <person name="Forrest D."/>
            <person name="Amos-Landgraf J."/>
            <person name="Schwartz D.C."/>
            <person name="Cheng Z."/>
            <person name="Lindblad-Toh K."/>
            <person name="Eichler E.E."/>
            <person name="Ponting C.P."/>
        </authorList>
    </citation>
    <scope>NUCLEOTIDE SEQUENCE [LARGE SCALE GENOMIC DNA]</scope>
    <source>
        <strain>C57BL/6J</strain>
    </source>
</reference>
<reference key="3">
    <citation type="journal article" date="2004" name="Genome Res.">
        <title>The status, quality, and expansion of the NIH full-length cDNA project: the Mammalian Gene Collection (MGC).</title>
        <authorList>
            <consortium name="The MGC Project Team"/>
        </authorList>
    </citation>
    <scope>NUCLEOTIDE SEQUENCE [LARGE SCALE MRNA] (ISOFORMS 1 AND 2)</scope>
    <source>
        <strain>Czech II</strain>
        <tissue>Brain</tissue>
        <tissue>Lung tumor</tissue>
    </source>
</reference>
<proteinExistence type="evidence at transcript level"/>
<name>RHBD3_MOUSE</name>
<organism>
    <name type="scientific">Mus musculus</name>
    <name type="common">Mouse</name>
    <dbReference type="NCBI Taxonomy" id="10090"/>
    <lineage>
        <taxon>Eukaryota</taxon>
        <taxon>Metazoa</taxon>
        <taxon>Chordata</taxon>
        <taxon>Craniata</taxon>
        <taxon>Vertebrata</taxon>
        <taxon>Euteleostomi</taxon>
        <taxon>Mammalia</taxon>
        <taxon>Eutheria</taxon>
        <taxon>Euarchontoglires</taxon>
        <taxon>Glires</taxon>
        <taxon>Rodentia</taxon>
        <taxon>Myomorpha</taxon>
        <taxon>Muroidea</taxon>
        <taxon>Muridae</taxon>
        <taxon>Murinae</taxon>
        <taxon>Mus</taxon>
        <taxon>Mus</taxon>
    </lineage>
</organism>
<gene>
    <name type="primary">Rhbdd3</name>
</gene>
<keyword id="KW-0025">Alternative splicing</keyword>
<keyword id="KW-0472">Membrane</keyword>
<keyword id="KW-1185">Reference proteome</keyword>
<keyword id="KW-0812">Transmembrane</keyword>
<keyword id="KW-1133">Transmembrane helix</keyword>
<evidence type="ECO:0000255" key="1"/>
<evidence type="ECO:0000256" key="2">
    <source>
        <dbReference type="SAM" id="MobiDB-lite"/>
    </source>
</evidence>
<evidence type="ECO:0000303" key="3">
    <source>
    </source>
</evidence>
<evidence type="ECO:0000305" key="4"/>
<accession>Q8BP97</accession>
<accession>A2RTD2</accession>
<accession>B7ZNK0</accession>
<accession>Q3U0Y4</accession>
<accession>Q5SUT5</accession>
<accession>Q5SUT6</accession>
<accession>Q5SUT7</accession>
<sequence length="385" mass="40934">MHAWEAPGSLSRALPLASSVLMLLLSCLWLLGAGPSLRLAPELLMEPWQVHRLLTHALGHTALPGLLLSLLLLPTLGWWQECHLGTVRFLHNSTVLALATGLLAVLLAGLGVSGAAGGCGYMPVHLAMLAGQSHHPGWPQRTLPPWLLPWLLLALTLLLSSEPPFLQLLCGLLTGLAYAAGAFQWLELSEQRLQVLQEGVLCKSLARCWPLRLFPTPGSLGELPVTYPAGVRPATPRPPYLASSDSWPHSDGSAQLPPRLGPGQLTWKNSERGLDWAGSSFASATTMWAALDEQMLQEGIQASLLDVSVQGSQSSLWLPKPSVSSLRLQQLQHMGFPTEQAAVALAATGRVEGAVSLLVEGLVDTEALVTEGRSSPAHCTGTGAS</sequence>
<protein>
    <recommendedName>
        <fullName>Rhomboid domain-containing protein 3</fullName>
    </recommendedName>
</protein>
<comment type="subcellular location">
    <subcellularLocation>
        <location evidence="4">Membrane</location>
        <topology evidence="4">Multi-pass membrane protein</topology>
    </subcellularLocation>
</comment>
<comment type="alternative products">
    <event type="alternative splicing"/>
    <isoform>
        <id>Q8BP97-1</id>
        <name>1</name>
        <sequence type="displayed"/>
    </isoform>
    <isoform>
        <id>Q8BP97-2</id>
        <name>2</name>
        <sequence type="described" ref="VSP_014669"/>
    </isoform>
</comment>
<dbReference type="EMBL" id="AK077457">
    <property type="protein sequence ID" value="BAC36809.1"/>
    <property type="molecule type" value="mRNA"/>
</dbReference>
<dbReference type="EMBL" id="AK156451">
    <property type="protein sequence ID" value="BAE33717.1"/>
    <property type="molecule type" value="mRNA"/>
</dbReference>
<dbReference type="EMBL" id="AL645845">
    <property type="status" value="NOT_ANNOTATED_CDS"/>
    <property type="molecule type" value="Genomic_DNA"/>
</dbReference>
<dbReference type="EMBL" id="BC096693">
    <property type="protein sequence ID" value="AAH96693.1"/>
    <property type="molecule type" value="mRNA"/>
</dbReference>
<dbReference type="EMBL" id="BC132459">
    <property type="protein sequence ID" value="AAI32460.1"/>
    <property type="molecule type" value="mRNA"/>
</dbReference>
<dbReference type="EMBL" id="BC145289">
    <property type="protein sequence ID" value="AAI45290.1"/>
    <property type="molecule type" value="mRNA"/>
</dbReference>
<dbReference type="CCDS" id="CCDS24397.1">
    <molecule id="Q8BP97-1"/>
</dbReference>
<dbReference type="CCDS" id="CCDS70133.1">
    <molecule id="Q8BP97-2"/>
</dbReference>
<dbReference type="RefSeq" id="NP_001277420.1">
    <molecule id="Q8BP97-2"/>
    <property type="nucleotide sequence ID" value="NM_001290491.1"/>
</dbReference>
<dbReference type="RefSeq" id="NP_001277421.1">
    <molecule id="Q8BP97-1"/>
    <property type="nucleotide sequence ID" value="NM_001290492.1"/>
</dbReference>
<dbReference type="RefSeq" id="NP_001277422.1">
    <molecule id="Q8BP97-1"/>
    <property type="nucleotide sequence ID" value="NM_001290493.1"/>
</dbReference>
<dbReference type="RefSeq" id="NP_796344.1">
    <molecule id="Q8BP97-1"/>
    <property type="nucleotide sequence ID" value="NM_177370.4"/>
</dbReference>
<dbReference type="RefSeq" id="XP_006514777.1">
    <molecule id="Q8BP97-1"/>
    <property type="nucleotide sequence ID" value="XM_006514714.4"/>
</dbReference>
<dbReference type="RefSeq" id="XP_006514778.1">
    <molecule id="Q8BP97-1"/>
    <property type="nucleotide sequence ID" value="XM_006514715.3"/>
</dbReference>
<dbReference type="RefSeq" id="XP_017170073.1">
    <molecule id="Q8BP97-2"/>
    <property type="nucleotide sequence ID" value="XM_017314584.2"/>
</dbReference>
<dbReference type="RefSeq" id="XP_030101920.1">
    <molecule id="Q8BP97-1"/>
    <property type="nucleotide sequence ID" value="XM_030246060.1"/>
</dbReference>
<dbReference type="RefSeq" id="XP_036012638.1">
    <molecule id="Q8BP97-1"/>
    <property type="nucleotide sequence ID" value="XM_036156745.1"/>
</dbReference>
<dbReference type="RefSeq" id="XP_036012639.1">
    <molecule id="Q8BP97-1"/>
    <property type="nucleotide sequence ID" value="XM_036156746.1"/>
</dbReference>
<dbReference type="SMR" id="Q8BP97"/>
<dbReference type="BioGRID" id="235012">
    <property type="interactions" value="3"/>
</dbReference>
<dbReference type="FunCoup" id="Q8BP97">
    <property type="interactions" value="476"/>
</dbReference>
<dbReference type="STRING" id="10090.ENSMUSP00000099131"/>
<dbReference type="GlyGen" id="Q8BP97">
    <property type="glycosylation" value="1 site"/>
</dbReference>
<dbReference type="iPTMnet" id="Q8BP97"/>
<dbReference type="PhosphoSitePlus" id="Q8BP97"/>
<dbReference type="SwissPalm" id="Q8BP97"/>
<dbReference type="PaxDb" id="10090-ENSMUSP00000099131"/>
<dbReference type="ProteomicsDB" id="253266">
    <molecule id="Q8BP97-1"/>
</dbReference>
<dbReference type="ProteomicsDB" id="253267">
    <molecule id="Q8BP97-2"/>
</dbReference>
<dbReference type="Antibodypedia" id="45284">
    <property type="antibodies" value="79 antibodies from 22 providers"/>
</dbReference>
<dbReference type="DNASU" id="279766"/>
<dbReference type="Ensembl" id="ENSMUST00000036320.12">
    <molecule id="Q8BP97-2"/>
    <property type="protein sequence ID" value="ENSMUSP00000044703.6"/>
    <property type="gene ID" value="ENSMUSG00000034175.14"/>
</dbReference>
<dbReference type="Ensembl" id="ENSMUST00000101610.10">
    <molecule id="Q8BP97-1"/>
    <property type="protein sequence ID" value="ENSMUSP00000099131.4"/>
    <property type="gene ID" value="ENSMUSG00000034175.14"/>
</dbReference>
<dbReference type="Ensembl" id="ENSMUST00000109878.9">
    <molecule id="Q8BP97-1"/>
    <property type="protein sequence ID" value="ENSMUSP00000105504.3"/>
    <property type="gene ID" value="ENSMUSG00000034175.14"/>
</dbReference>
<dbReference type="GeneID" id="279766"/>
<dbReference type="KEGG" id="mmu:279766"/>
<dbReference type="UCSC" id="uc007hwb.2">
    <molecule id="Q8BP97-1"/>
    <property type="organism name" value="mouse"/>
</dbReference>
<dbReference type="UCSC" id="uc007hwd.2">
    <molecule id="Q8BP97-2"/>
    <property type="organism name" value="mouse"/>
</dbReference>
<dbReference type="AGR" id="MGI:2444684"/>
<dbReference type="CTD" id="25807"/>
<dbReference type="MGI" id="MGI:2444684">
    <property type="gene designation" value="Rhbdd3"/>
</dbReference>
<dbReference type="VEuPathDB" id="HostDB:ENSMUSG00000034175"/>
<dbReference type="eggNOG" id="KOG2632">
    <property type="taxonomic scope" value="Eukaryota"/>
</dbReference>
<dbReference type="GeneTree" id="ENSGT00390000013711"/>
<dbReference type="HOGENOM" id="CLU_060547_0_0_1"/>
<dbReference type="InParanoid" id="Q8BP97"/>
<dbReference type="OMA" id="CIGHNYH"/>
<dbReference type="OrthoDB" id="9908508at2759"/>
<dbReference type="PhylomeDB" id="Q8BP97"/>
<dbReference type="TreeFam" id="TF332785"/>
<dbReference type="BioGRID-ORCS" id="279766">
    <property type="hits" value="1 hit in 79 CRISPR screens"/>
</dbReference>
<dbReference type="ChiTaRS" id="Rhbdd3">
    <property type="organism name" value="mouse"/>
</dbReference>
<dbReference type="PRO" id="PR:Q8BP97"/>
<dbReference type="Proteomes" id="UP000000589">
    <property type="component" value="Chromosome 11"/>
</dbReference>
<dbReference type="RNAct" id="Q8BP97">
    <property type="molecule type" value="protein"/>
</dbReference>
<dbReference type="Bgee" id="ENSMUSG00000034175">
    <property type="expression patterns" value="Expressed in spermatocyte and 229 other cell types or tissues"/>
</dbReference>
<dbReference type="ExpressionAtlas" id="Q8BP97">
    <property type="expression patterns" value="baseline and differential"/>
</dbReference>
<dbReference type="GO" id="GO:0016020">
    <property type="term" value="C:membrane"/>
    <property type="evidence" value="ECO:0007669"/>
    <property type="project" value="UniProtKB-SubCell"/>
</dbReference>
<dbReference type="GO" id="GO:0004252">
    <property type="term" value="F:serine-type endopeptidase activity"/>
    <property type="evidence" value="ECO:0007669"/>
    <property type="project" value="InterPro"/>
</dbReference>
<dbReference type="GO" id="GO:0001889">
    <property type="term" value="P:liver development"/>
    <property type="evidence" value="ECO:0000315"/>
    <property type="project" value="MGI"/>
</dbReference>
<dbReference type="GO" id="GO:0000165">
    <property type="term" value="P:MAPK cascade"/>
    <property type="evidence" value="ECO:0000314"/>
    <property type="project" value="MGI"/>
</dbReference>
<dbReference type="GO" id="GO:0032815">
    <property type="term" value="P:negative regulation of natural killer cell activation"/>
    <property type="evidence" value="ECO:0000315"/>
    <property type="project" value="MGI"/>
</dbReference>
<dbReference type="GO" id="GO:0045732">
    <property type="term" value="P:positive regulation of protein catabolic process"/>
    <property type="evidence" value="ECO:0000314"/>
    <property type="project" value="MGI"/>
</dbReference>
<dbReference type="GO" id="GO:0002673">
    <property type="term" value="P:regulation of acute inflammatory response"/>
    <property type="evidence" value="ECO:0000315"/>
    <property type="project" value="MGI"/>
</dbReference>
<dbReference type="GO" id="GO:0050708">
    <property type="term" value="P:regulation of protein secretion"/>
    <property type="evidence" value="ECO:0000315"/>
    <property type="project" value="MGI"/>
</dbReference>
<dbReference type="GO" id="GO:0009410">
    <property type="term" value="P:response to xenobiotic stimulus"/>
    <property type="evidence" value="ECO:0000315"/>
    <property type="project" value="MGI"/>
</dbReference>
<dbReference type="Gene3D" id="1.10.8.10">
    <property type="entry name" value="DNA helicase RuvA subunit, C-terminal domain"/>
    <property type="match status" value="1"/>
</dbReference>
<dbReference type="Gene3D" id="1.20.1540.10">
    <property type="entry name" value="Rhomboid-like"/>
    <property type="match status" value="1"/>
</dbReference>
<dbReference type="InterPro" id="IPR022764">
    <property type="entry name" value="Peptidase_S54_rhomboid_dom"/>
</dbReference>
<dbReference type="InterPro" id="IPR035952">
    <property type="entry name" value="Rhomboid-like_sf"/>
</dbReference>
<dbReference type="InterPro" id="IPR015940">
    <property type="entry name" value="UBA"/>
</dbReference>
<dbReference type="InterPro" id="IPR009060">
    <property type="entry name" value="UBA-like_sf"/>
</dbReference>
<dbReference type="PANTHER" id="PTHR43066:SF16">
    <property type="entry name" value="RHOMBOID DOMAIN-CONTAINING PROTEIN 3"/>
    <property type="match status" value="1"/>
</dbReference>
<dbReference type="PANTHER" id="PTHR43066">
    <property type="entry name" value="RHOMBOID-RELATED PROTEIN"/>
    <property type="match status" value="1"/>
</dbReference>
<dbReference type="Pfam" id="PF01694">
    <property type="entry name" value="Rhomboid"/>
    <property type="match status" value="1"/>
</dbReference>
<dbReference type="Pfam" id="PF00627">
    <property type="entry name" value="UBA"/>
    <property type="match status" value="1"/>
</dbReference>
<dbReference type="SUPFAM" id="SSF144091">
    <property type="entry name" value="Rhomboid-like"/>
    <property type="match status" value="1"/>
</dbReference>
<dbReference type="SUPFAM" id="SSF46934">
    <property type="entry name" value="UBA-like"/>
    <property type="match status" value="1"/>
</dbReference>
<feature type="chain" id="PRO_0000079570" description="Rhomboid domain-containing protein 3">
    <location>
        <begin position="1"/>
        <end position="385"/>
    </location>
</feature>
<feature type="transmembrane region" description="Helical" evidence="1">
    <location>
        <begin position="13"/>
        <end position="33"/>
    </location>
</feature>
<feature type="transmembrane region" description="Helical" evidence="1">
    <location>
        <begin position="58"/>
        <end position="78"/>
    </location>
</feature>
<feature type="transmembrane region" description="Helical" evidence="1">
    <location>
        <begin position="95"/>
        <end position="115"/>
    </location>
</feature>
<feature type="transmembrane region" description="Helical" evidence="1">
    <location>
        <begin position="146"/>
        <end position="166"/>
    </location>
</feature>
<feature type="transmembrane region" description="Helical" evidence="1">
    <location>
        <begin position="168"/>
        <end position="188"/>
    </location>
</feature>
<feature type="domain" description="UBA">
    <location>
        <begin position="322"/>
        <end position="361"/>
    </location>
</feature>
<feature type="region of interest" description="Disordered" evidence="2">
    <location>
        <begin position="238"/>
        <end position="264"/>
    </location>
</feature>
<feature type="splice variant" id="VSP_014669" description="In isoform 2." evidence="3">
    <original>YAAGAFQWLELSEQRLQVLQEGVLCKSLARCWPLRLFPTPGSLGELPVTYPAGVR</original>
    <variation>CRCCWGLPVAGALRAETAGVTGRCPLQVSGPMLAAEALSHPGQSG</variation>
    <location>
        <begin position="178"/>
        <end position="232"/>
    </location>
</feature>